<dbReference type="EC" id="2.7.1.23" evidence="1"/>
<dbReference type="EMBL" id="FM209186">
    <property type="protein sequence ID" value="CAW26700.1"/>
    <property type="molecule type" value="Genomic_DNA"/>
</dbReference>
<dbReference type="RefSeq" id="WP_003091343.1">
    <property type="nucleotide sequence ID" value="NC_011770.1"/>
</dbReference>
<dbReference type="SMR" id="B7UUY3"/>
<dbReference type="KEGG" id="pag:PLES_19721"/>
<dbReference type="HOGENOM" id="CLU_008831_0_1_6"/>
<dbReference type="GO" id="GO:0005737">
    <property type="term" value="C:cytoplasm"/>
    <property type="evidence" value="ECO:0007669"/>
    <property type="project" value="UniProtKB-SubCell"/>
</dbReference>
<dbReference type="GO" id="GO:0005524">
    <property type="term" value="F:ATP binding"/>
    <property type="evidence" value="ECO:0007669"/>
    <property type="project" value="UniProtKB-KW"/>
</dbReference>
<dbReference type="GO" id="GO:0046872">
    <property type="term" value="F:metal ion binding"/>
    <property type="evidence" value="ECO:0007669"/>
    <property type="project" value="UniProtKB-UniRule"/>
</dbReference>
<dbReference type="GO" id="GO:0051287">
    <property type="term" value="F:NAD binding"/>
    <property type="evidence" value="ECO:0007669"/>
    <property type="project" value="UniProtKB-ARBA"/>
</dbReference>
<dbReference type="GO" id="GO:0003951">
    <property type="term" value="F:NAD+ kinase activity"/>
    <property type="evidence" value="ECO:0007669"/>
    <property type="project" value="UniProtKB-UniRule"/>
</dbReference>
<dbReference type="GO" id="GO:0019674">
    <property type="term" value="P:NAD metabolic process"/>
    <property type="evidence" value="ECO:0007669"/>
    <property type="project" value="InterPro"/>
</dbReference>
<dbReference type="GO" id="GO:0006741">
    <property type="term" value="P:NADP biosynthetic process"/>
    <property type="evidence" value="ECO:0007669"/>
    <property type="project" value="UniProtKB-UniRule"/>
</dbReference>
<dbReference type="FunFam" id="2.60.200.30:FF:000001">
    <property type="entry name" value="NAD kinase"/>
    <property type="match status" value="1"/>
</dbReference>
<dbReference type="Gene3D" id="3.40.50.10330">
    <property type="entry name" value="Probable inorganic polyphosphate/atp-NAD kinase, domain 1"/>
    <property type="match status" value="1"/>
</dbReference>
<dbReference type="Gene3D" id="2.60.200.30">
    <property type="entry name" value="Probable inorganic polyphosphate/atp-NAD kinase, domain 2"/>
    <property type="match status" value="1"/>
</dbReference>
<dbReference type="HAMAP" id="MF_00361">
    <property type="entry name" value="NAD_kinase"/>
    <property type="match status" value="1"/>
</dbReference>
<dbReference type="InterPro" id="IPR017438">
    <property type="entry name" value="ATP-NAD_kinase_N"/>
</dbReference>
<dbReference type="InterPro" id="IPR017437">
    <property type="entry name" value="ATP-NAD_kinase_PpnK-typ_C"/>
</dbReference>
<dbReference type="InterPro" id="IPR016064">
    <property type="entry name" value="NAD/diacylglycerol_kinase_sf"/>
</dbReference>
<dbReference type="InterPro" id="IPR002504">
    <property type="entry name" value="NADK"/>
</dbReference>
<dbReference type="NCBIfam" id="NF002306">
    <property type="entry name" value="PRK01231.1"/>
    <property type="match status" value="1"/>
</dbReference>
<dbReference type="PANTHER" id="PTHR20275">
    <property type="entry name" value="NAD KINASE"/>
    <property type="match status" value="1"/>
</dbReference>
<dbReference type="PANTHER" id="PTHR20275:SF0">
    <property type="entry name" value="NAD KINASE"/>
    <property type="match status" value="1"/>
</dbReference>
<dbReference type="Pfam" id="PF01513">
    <property type="entry name" value="NAD_kinase"/>
    <property type="match status" value="1"/>
</dbReference>
<dbReference type="Pfam" id="PF20143">
    <property type="entry name" value="NAD_kinase_C"/>
    <property type="match status" value="1"/>
</dbReference>
<dbReference type="SUPFAM" id="SSF111331">
    <property type="entry name" value="NAD kinase/diacylglycerol kinase-like"/>
    <property type="match status" value="1"/>
</dbReference>
<comment type="function">
    <text evidence="1">Involved in the regulation of the intracellular balance of NAD and NADP, and is a key enzyme in the biosynthesis of NADP. Catalyzes specifically the phosphorylation on 2'-hydroxyl of the adenosine moiety of NAD to yield NADP.</text>
</comment>
<comment type="catalytic activity">
    <reaction evidence="1">
        <text>NAD(+) + ATP = ADP + NADP(+) + H(+)</text>
        <dbReference type="Rhea" id="RHEA:18629"/>
        <dbReference type="ChEBI" id="CHEBI:15378"/>
        <dbReference type="ChEBI" id="CHEBI:30616"/>
        <dbReference type="ChEBI" id="CHEBI:57540"/>
        <dbReference type="ChEBI" id="CHEBI:58349"/>
        <dbReference type="ChEBI" id="CHEBI:456216"/>
        <dbReference type="EC" id="2.7.1.23"/>
    </reaction>
</comment>
<comment type="cofactor">
    <cofactor evidence="1">
        <name>a divalent metal cation</name>
        <dbReference type="ChEBI" id="CHEBI:60240"/>
    </cofactor>
</comment>
<comment type="subcellular location">
    <subcellularLocation>
        <location evidence="1">Cytoplasm</location>
    </subcellularLocation>
</comment>
<comment type="similarity">
    <text evidence="1">Belongs to the NAD kinase family.</text>
</comment>
<name>NADK_PSEA8</name>
<feature type="chain" id="PRO_1000120878" description="NAD kinase">
    <location>
        <begin position="1"/>
        <end position="295"/>
    </location>
</feature>
<feature type="active site" description="Proton acceptor" evidence="1">
    <location>
        <position position="72"/>
    </location>
</feature>
<feature type="binding site" evidence="1">
    <location>
        <begin position="72"/>
        <end position="73"/>
    </location>
    <ligand>
        <name>NAD(+)</name>
        <dbReference type="ChEBI" id="CHEBI:57540"/>
    </ligand>
</feature>
<feature type="binding site" evidence="1">
    <location>
        <begin position="146"/>
        <end position="147"/>
    </location>
    <ligand>
        <name>NAD(+)</name>
        <dbReference type="ChEBI" id="CHEBI:57540"/>
    </ligand>
</feature>
<feature type="binding site" evidence="1">
    <location>
        <position position="157"/>
    </location>
    <ligand>
        <name>NAD(+)</name>
        <dbReference type="ChEBI" id="CHEBI:57540"/>
    </ligand>
</feature>
<feature type="binding site" evidence="1">
    <location>
        <position position="174"/>
    </location>
    <ligand>
        <name>NAD(+)</name>
        <dbReference type="ChEBI" id="CHEBI:57540"/>
    </ligand>
</feature>
<feature type="binding site" evidence="1">
    <location>
        <position position="176"/>
    </location>
    <ligand>
        <name>NAD(+)</name>
        <dbReference type="ChEBI" id="CHEBI:57540"/>
    </ligand>
</feature>
<feature type="binding site" evidence="1">
    <location>
        <begin position="187"/>
        <end position="192"/>
    </location>
    <ligand>
        <name>NAD(+)</name>
        <dbReference type="ChEBI" id="CHEBI:57540"/>
    </ligand>
</feature>
<feature type="binding site" evidence="1">
    <location>
        <position position="247"/>
    </location>
    <ligand>
        <name>NAD(+)</name>
        <dbReference type="ChEBI" id="CHEBI:57540"/>
    </ligand>
</feature>
<keyword id="KW-0067">ATP-binding</keyword>
<keyword id="KW-0963">Cytoplasm</keyword>
<keyword id="KW-0418">Kinase</keyword>
<keyword id="KW-0520">NAD</keyword>
<keyword id="KW-0521">NADP</keyword>
<keyword id="KW-0547">Nucleotide-binding</keyword>
<keyword id="KW-0808">Transferase</keyword>
<sequence length="295" mass="32140">MEPFRNIGIIGRLGSTQVLDTIRRLKKFLIDRHLHVILEDTIAEVLPGHGLQTCSRKIMGEICDLVVVVGGDGSMLGAARALARHKVPVLGINRGSLGFLTDIRPDELEAKVGEVLDGQYIVESRFLLDAQVRRGIDSMGQGDALNDVVLHPGKSTRMIEFELYIDGQFVCSQKADGLIVATPTGSTAYALSAGGPIMHPKLDAIVIVPMYPHMLSSRPIVVDGNSELKIVVSPNMQIYPQVSCDGQNHFTCAPGDTVTISKKPQKLRLIHPIDHNYYEICRTKLGWGSRLGGGD</sequence>
<protein>
    <recommendedName>
        <fullName evidence="1">NAD kinase</fullName>
        <ecNumber evidence="1">2.7.1.23</ecNumber>
    </recommendedName>
    <alternativeName>
        <fullName evidence="1">ATP-dependent NAD kinase</fullName>
    </alternativeName>
</protein>
<evidence type="ECO:0000255" key="1">
    <source>
        <dbReference type="HAMAP-Rule" id="MF_00361"/>
    </source>
</evidence>
<accession>B7UUY3</accession>
<organism>
    <name type="scientific">Pseudomonas aeruginosa (strain LESB58)</name>
    <dbReference type="NCBI Taxonomy" id="557722"/>
    <lineage>
        <taxon>Bacteria</taxon>
        <taxon>Pseudomonadati</taxon>
        <taxon>Pseudomonadota</taxon>
        <taxon>Gammaproteobacteria</taxon>
        <taxon>Pseudomonadales</taxon>
        <taxon>Pseudomonadaceae</taxon>
        <taxon>Pseudomonas</taxon>
    </lineage>
</organism>
<gene>
    <name evidence="1" type="primary">nadK</name>
    <name type="ordered locus">PLES_19721</name>
</gene>
<reference key="1">
    <citation type="journal article" date="2009" name="Genome Res.">
        <title>Newly introduced genomic prophage islands are critical determinants of in vivo competitiveness in the Liverpool epidemic strain of Pseudomonas aeruginosa.</title>
        <authorList>
            <person name="Winstanley C."/>
            <person name="Langille M.G.I."/>
            <person name="Fothergill J.L."/>
            <person name="Kukavica-Ibrulj I."/>
            <person name="Paradis-Bleau C."/>
            <person name="Sanschagrin F."/>
            <person name="Thomson N.R."/>
            <person name="Winsor G.L."/>
            <person name="Quail M.A."/>
            <person name="Lennard N."/>
            <person name="Bignell A."/>
            <person name="Clarke L."/>
            <person name="Seeger K."/>
            <person name="Saunders D."/>
            <person name="Harris D."/>
            <person name="Parkhill J."/>
            <person name="Hancock R.E.W."/>
            <person name="Brinkman F.S.L."/>
            <person name="Levesque R.C."/>
        </authorList>
    </citation>
    <scope>NUCLEOTIDE SEQUENCE [LARGE SCALE GENOMIC DNA]</scope>
    <source>
        <strain>LESB58</strain>
    </source>
</reference>
<proteinExistence type="inferred from homology"/>